<protein>
    <recommendedName>
        <fullName>Olfactory receptor 2A2</fullName>
    </recommendedName>
    <alternativeName>
        <fullName>Olfactory receptor 2A17</fullName>
    </alternativeName>
    <alternativeName>
        <fullName>Olfactory receptor OR7-11</fullName>
    </alternativeName>
</protein>
<sequence>MEGNQTWITDITLLGFQVGPALAILLCGLFSVFYTLTLLGNGVIFGIICLDSKLHTPMYFFLSHLAIIDMSYASNNVPKMLANLMNQKRTISFVPCIMQTFLYLAFAVTECLILVVMSYDRYVAICHPFQYTVIMSWRVCTILVLTSWSCGFALSLVHEILLLRLPFCGPRDVNHLFCEILSVLKLACADTWVNQVVIFATCVFVLVGPLSLILVSYMHILGAILKIQTKEGRIKAFSTCSSHLCVVGLFFGIAMVVYMVPDSNQREEQEKMLSLFHSVFNPMLNPLIYSLRNAQLKGALHRALQRKRSMRTVYGLCL</sequence>
<keyword id="KW-1003">Cell membrane</keyword>
<keyword id="KW-0297">G-protein coupled receptor</keyword>
<keyword id="KW-0325">Glycoprotein</keyword>
<keyword id="KW-0472">Membrane</keyword>
<keyword id="KW-0552">Olfaction</keyword>
<keyword id="KW-0675">Receptor</keyword>
<keyword id="KW-1185">Reference proteome</keyword>
<keyword id="KW-0716">Sensory transduction</keyword>
<keyword id="KW-0807">Transducer</keyword>
<keyword id="KW-0812">Transmembrane</keyword>
<keyword id="KW-1133">Transmembrane helix</keyword>
<proteinExistence type="evidence at transcript level"/>
<comment type="function">
    <text evidence="4">Odorant receptor.</text>
</comment>
<comment type="subcellular location">
    <subcellularLocation>
        <location>Cell membrane</location>
        <topology>Multi-pass membrane protein</topology>
    </subcellularLocation>
</comment>
<comment type="similarity">
    <text evidence="2">Belongs to the G-protein coupled receptor 1 family.</text>
</comment>
<comment type="online information" name="Human Olfactory Receptor Data Exploratorium (HORDE)">
    <link uri="http://genome.weizmann.ac.il/horde/card/index/symbol:OR2A2"/>
</comment>
<organism>
    <name type="scientific">Homo sapiens</name>
    <name type="common">Human</name>
    <dbReference type="NCBI Taxonomy" id="9606"/>
    <lineage>
        <taxon>Eukaryota</taxon>
        <taxon>Metazoa</taxon>
        <taxon>Chordata</taxon>
        <taxon>Craniata</taxon>
        <taxon>Vertebrata</taxon>
        <taxon>Euteleostomi</taxon>
        <taxon>Mammalia</taxon>
        <taxon>Eutheria</taxon>
        <taxon>Euarchontoglires</taxon>
        <taxon>Primates</taxon>
        <taxon>Haplorrhini</taxon>
        <taxon>Catarrhini</taxon>
        <taxon>Hominidae</taxon>
        <taxon>Homo</taxon>
    </lineage>
</organism>
<gene>
    <name type="primary">OR2A2</name>
    <name type="synonym">OR2A17P</name>
    <name type="synonym">OR2A2P</name>
</gene>
<feature type="chain" id="PRO_0000150453" description="Olfactory receptor 2A2">
    <location>
        <begin position="1"/>
        <end position="318"/>
    </location>
</feature>
<feature type="topological domain" description="Extracellular" evidence="1">
    <location>
        <begin position="1"/>
        <end position="24"/>
    </location>
</feature>
<feature type="transmembrane region" description="Helical; Name=1" evidence="1">
    <location>
        <begin position="25"/>
        <end position="48"/>
    </location>
</feature>
<feature type="topological domain" description="Cytoplasmic" evidence="1">
    <location>
        <begin position="49"/>
        <end position="56"/>
    </location>
</feature>
<feature type="transmembrane region" description="Helical; Name=2" evidence="1">
    <location>
        <begin position="57"/>
        <end position="78"/>
    </location>
</feature>
<feature type="topological domain" description="Extracellular" evidence="1">
    <location>
        <begin position="79"/>
        <end position="99"/>
    </location>
</feature>
<feature type="transmembrane region" description="Helical; Name=3" evidence="1">
    <location>
        <begin position="100"/>
        <end position="119"/>
    </location>
</feature>
<feature type="topological domain" description="Cytoplasmic" evidence="1">
    <location>
        <begin position="120"/>
        <end position="138"/>
    </location>
</feature>
<feature type="transmembrane region" description="Helical; Name=4" evidence="1">
    <location>
        <begin position="139"/>
        <end position="157"/>
    </location>
</feature>
<feature type="topological domain" description="Extracellular" evidence="1">
    <location>
        <begin position="158"/>
        <end position="194"/>
    </location>
</feature>
<feature type="transmembrane region" description="Helical; Name=5" evidence="1">
    <location>
        <begin position="195"/>
        <end position="218"/>
    </location>
</feature>
<feature type="topological domain" description="Cytoplasmic" evidence="1">
    <location>
        <begin position="219"/>
        <end position="235"/>
    </location>
</feature>
<feature type="transmembrane region" description="Helical; Name=6" evidence="1">
    <location>
        <begin position="236"/>
        <end position="258"/>
    </location>
</feature>
<feature type="topological domain" description="Extracellular" evidence="1">
    <location>
        <begin position="259"/>
        <end position="271"/>
    </location>
</feature>
<feature type="transmembrane region" description="Helical; Name=7" evidence="1">
    <location>
        <begin position="272"/>
        <end position="291"/>
    </location>
</feature>
<feature type="topological domain" description="Cytoplasmic" evidence="1">
    <location>
        <begin position="292"/>
        <end position="310"/>
    </location>
</feature>
<feature type="glycosylation site" description="N-linked (GlcNAc...) asparagine" evidence="1">
    <location>
        <position position="4"/>
    </location>
</feature>
<feature type="sequence variant" id="VAR_059982" description="In dbSNP:rs10230228.">
    <original>Q</original>
    <variation>K</variation>
    <location>
        <position position="5"/>
    </location>
</feature>
<feature type="sequence variant" id="VAR_053128" description="In dbSNP:rs10252253.">
    <original>L</original>
    <variation>P</variation>
    <location>
        <position position="210"/>
    </location>
</feature>
<feature type="sequence variant" id="VAR_059983" description="In dbSNP:rs2961149." evidence="3">
    <original>F</original>
    <variation>L</variation>
    <location>
        <position position="280"/>
    </location>
</feature>
<dbReference type="EMBL" id="AB065695">
    <property type="protein sequence ID" value="BAC05918.1"/>
    <property type="molecule type" value="Genomic_DNA"/>
</dbReference>
<dbReference type="EMBL" id="AC091768">
    <property type="status" value="NOT_ANNOTATED_CDS"/>
    <property type="molecule type" value="Genomic_DNA"/>
</dbReference>
<dbReference type="EMBL" id="BC136742">
    <property type="protein sequence ID" value="AAI36743.1"/>
    <property type="molecule type" value="mRNA"/>
</dbReference>
<dbReference type="EMBL" id="BK004420">
    <property type="protein sequence ID" value="DAA04818.1"/>
    <property type="molecule type" value="Genomic_DNA"/>
</dbReference>
<dbReference type="CCDS" id="CCDS43671.1"/>
<dbReference type="RefSeq" id="NP_001005480.2">
    <property type="nucleotide sequence ID" value="NM_001005480.2"/>
</dbReference>
<dbReference type="SMR" id="Q6IF42"/>
<dbReference type="BioGRID" id="138235">
    <property type="interactions" value="5"/>
</dbReference>
<dbReference type="FunCoup" id="Q6IF42">
    <property type="interactions" value="448"/>
</dbReference>
<dbReference type="IntAct" id="Q6IF42">
    <property type="interactions" value="1"/>
</dbReference>
<dbReference type="STRING" id="9606.ENSP00000386209"/>
<dbReference type="GlyCosmos" id="Q6IF42">
    <property type="glycosylation" value="1 site, No reported glycans"/>
</dbReference>
<dbReference type="GlyGen" id="Q6IF42">
    <property type="glycosylation" value="1 site"/>
</dbReference>
<dbReference type="iPTMnet" id="Q6IF42"/>
<dbReference type="PhosphoSitePlus" id="Q6IF42"/>
<dbReference type="BioMuta" id="OR2A2"/>
<dbReference type="DMDM" id="84029381"/>
<dbReference type="MassIVE" id="Q6IF42"/>
<dbReference type="PaxDb" id="9606-ENSP00000386209"/>
<dbReference type="PeptideAtlas" id="Q6IF42"/>
<dbReference type="Antibodypedia" id="32705">
    <property type="antibodies" value="21 antibodies from 15 providers"/>
</dbReference>
<dbReference type="DNASU" id="442361"/>
<dbReference type="Ensembl" id="ENST00000408979.3">
    <property type="protein sequence ID" value="ENSP00000386209.2"/>
    <property type="gene ID" value="ENSG00000221989.3"/>
</dbReference>
<dbReference type="GeneID" id="442361"/>
<dbReference type="KEGG" id="hsa:442361"/>
<dbReference type="MANE-Select" id="ENST00000408979.3">
    <property type="protein sequence ID" value="ENSP00000386209.2"/>
    <property type="RefSeq nucleotide sequence ID" value="NM_001005480.2"/>
    <property type="RefSeq protein sequence ID" value="NP_001005480.2"/>
</dbReference>
<dbReference type="UCSC" id="uc011ktz.3">
    <property type="organism name" value="human"/>
</dbReference>
<dbReference type="AGR" id="HGNC:8230"/>
<dbReference type="CTD" id="442361"/>
<dbReference type="GeneCards" id="OR2A2"/>
<dbReference type="HGNC" id="HGNC:8230">
    <property type="gene designation" value="OR2A2"/>
</dbReference>
<dbReference type="HPA" id="ENSG00000221989">
    <property type="expression patterns" value="Not detected"/>
</dbReference>
<dbReference type="neXtProt" id="NX_Q6IF42"/>
<dbReference type="VEuPathDB" id="HostDB:ENSG00000221989"/>
<dbReference type="eggNOG" id="ENOG502T1JY">
    <property type="taxonomic scope" value="Eukaryota"/>
</dbReference>
<dbReference type="GeneTree" id="ENSGT00940000153255"/>
<dbReference type="HOGENOM" id="CLU_012526_1_2_1"/>
<dbReference type="InParanoid" id="Q6IF42"/>
<dbReference type="OMA" id="RSMRTVY"/>
<dbReference type="OrthoDB" id="6147321at2759"/>
<dbReference type="PAN-GO" id="Q6IF42">
    <property type="GO annotations" value="0 GO annotations based on evolutionary models"/>
</dbReference>
<dbReference type="PhylomeDB" id="Q6IF42"/>
<dbReference type="TreeFam" id="TF337251"/>
<dbReference type="PathwayCommons" id="Q6IF42"/>
<dbReference type="Reactome" id="R-HSA-9752946">
    <property type="pathway name" value="Expression and translocation of olfactory receptors"/>
</dbReference>
<dbReference type="BioGRID-ORCS" id="442361">
    <property type="hits" value="7 hits in 703 CRISPR screens"/>
</dbReference>
<dbReference type="GeneWiki" id="OR2A2"/>
<dbReference type="GenomeRNAi" id="442361"/>
<dbReference type="Pharos" id="Q6IF42">
    <property type="development level" value="Tdark"/>
</dbReference>
<dbReference type="PRO" id="PR:Q6IF42"/>
<dbReference type="Proteomes" id="UP000005640">
    <property type="component" value="Chromosome 7"/>
</dbReference>
<dbReference type="RNAct" id="Q6IF42">
    <property type="molecule type" value="protein"/>
</dbReference>
<dbReference type="Bgee" id="ENSG00000221989">
    <property type="expression patterns" value="Expressed in calcaneal tendon and 3 other cell types or tissues"/>
</dbReference>
<dbReference type="ExpressionAtlas" id="Q6IF42">
    <property type="expression patterns" value="baseline and differential"/>
</dbReference>
<dbReference type="GO" id="GO:0005886">
    <property type="term" value="C:plasma membrane"/>
    <property type="evidence" value="ECO:0000318"/>
    <property type="project" value="GO_Central"/>
</dbReference>
<dbReference type="GO" id="GO:0004930">
    <property type="term" value="F:G protein-coupled receptor activity"/>
    <property type="evidence" value="ECO:0007669"/>
    <property type="project" value="UniProtKB-KW"/>
</dbReference>
<dbReference type="GO" id="GO:0004984">
    <property type="term" value="F:olfactory receptor activity"/>
    <property type="evidence" value="ECO:0000318"/>
    <property type="project" value="GO_Central"/>
</dbReference>
<dbReference type="GO" id="GO:0050911">
    <property type="term" value="P:detection of chemical stimulus involved in sensory perception of smell"/>
    <property type="evidence" value="ECO:0000318"/>
    <property type="project" value="GO_Central"/>
</dbReference>
<dbReference type="CDD" id="cd15420">
    <property type="entry name" value="7tmA_OR2A-like"/>
    <property type="match status" value="1"/>
</dbReference>
<dbReference type="FunFam" id="1.10.1220.70:FF:000001">
    <property type="entry name" value="Olfactory receptor"/>
    <property type="match status" value="1"/>
</dbReference>
<dbReference type="FunFam" id="1.20.1070.10:FF:000008">
    <property type="entry name" value="Olfactory receptor"/>
    <property type="match status" value="1"/>
</dbReference>
<dbReference type="Gene3D" id="1.20.1070.10">
    <property type="entry name" value="Rhodopsin 7-helix transmembrane proteins"/>
    <property type="match status" value="1"/>
</dbReference>
<dbReference type="InterPro" id="IPR000276">
    <property type="entry name" value="GPCR_Rhodpsn"/>
</dbReference>
<dbReference type="InterPro" id="IPR017452">
    <property type="entry name" value="GPCR_Rhodpsn_7TM"/>
</dbReference>
<dbReference type="InterPro" id="IPR000725">
    <property type="entry name" value="Olfact_rcpt"/>
</dbReference>
<dbReference type="PANTHER" id="PTHR26453">
    <property type="entry name" value="OLFACTORY RECEPTOR"/>
    <property type="match status" value="1"/>
</dbReference>
<dbReference type="Pfam" id="PF13853">
    <property type="entry name" value="7tm_4"/>
    <property type="match status" value="1"/>
</dbReference>
<dbReference type="PRINTS" id="PR00237">
    <property type="entry name" value="GPCRRHODOPSN"/>
</dbReference>
<dbReference type="PRINTS" id="PR00245">
    <property type="entry name" value="OLFACTORYR"/>
</dbReference>
<dbReference type="SUPFAM" id="SSF81321">
    <property type="entry name" value="Family A G protein-coupled receptor-like"/>
    <property type="match status" value="1"/>
</dbReference>
<dbReference type="PROSITE" id="PS00237">
    <property type="entry name" value="G_PROTEIN_RECEP_F1_1"/>
    <property type="match status" value="1"/>
</dbReference>
<dbReference type="PROSITE" id="PS50262">
    <property type="entry name" value="G_PROTEIN_RECEP_F1_2"/>
    <property type="match status" value="1"/>
</dbReference>
<evidence type="ECO:0000255" key="1"/>
<evidence type="ECO:0000255" key="2">
    <source>
        <dbReference type="PROSITE-ProRule" id="PRU00521"/>
    </source>
</evidence>
<evidence type="ECO:0000269" key="3">
    <source>
    </source>
</evidence>
<evidence type="ECO:0000305" key="4"/>
<accession>Q6IF42</accession>
<accession>B2RN85</accession>
<accession>Q8NGT6</accession>
<name>OR2A2_HUMAN</name>
<reference key="1">
    <citation type="submission" date="2001-07" db="EMBL/GenBank/DDBJ databases">
        <title>Genome-wide discovery and analysis of human seven transmembrane helix receptor genes.</title>
        <authorList>
            <person name="Suwa M."/>
            <person name="Sato T."/>
            <person name="Okouchi I."/>
            <person name="Arita M."/>
            <person name="Futami K."/>
            <person name="Matsumoto S."/>
            <person name="Tsutsumi S."/>
            <person name="Aburatani H."/>
            <person name="Asai K."/>
            <person name="Akiyama Y."/>
        </authorList>
    </citation>
    <scope>NUCLEOTIDE SEQUENCE [GENOMIC DNA]</scope>
</reference>
<reference key="2">
    <citation type="journal article" date="2003" name="Nature">
        <title>The DNA sequence of human chromosome 7.</title>
        <authorList>
            <person name="Hillier L.W."/>
            <person name="Fulton R.S."/>
            <person name="Fulton L.A."/>
            <person name="Graves T.A."/>
            <person name="Pepin K.H."/>
            <person name="Wagner-McPherson C."/>
            <person name="Layman D."/>
            <person name="Maas J."/>
            <person name="Jaeger S."/>
            <person name="Walker R."/>
            <person name="Wylie K."/>
            <person name="Sekhon M."/>
            <person name="Becker M.C."/>
            <person name="O'Laughlin M.D."/>
            <person name="Schaller M.E."/>
            <person name="Fewell G.A."/>
            <person name="Delehaunty K.D."/>
            <person name="Miner T.L."/>
            <person name="Nash W.E."/>
            <person name="Cordes M."/>
            <person name="Du H."/>
            <person name="Sun H."/>
            <person name="Edwards J."/>
            <person name="Bradshaw-Cordum H."/>
            <person name="Ali J."/>
            <person name="Andrews S."/>
            <person name="Isak A."/>
            <person name="Vanbrunt A."/>
            <person name="Nguyen C."/>
            <person name="Du F."/>
            <person name="Lamar B."/>
            <person name="Courtney L."/>
            <person name="Kalicki J."/>
            <person name="Ozersky P."/>
            <person name="Bielicki L."/>
            <person name="Scott K."/>
            <person name="Holmes A."/>
            <person name="Harkins R."/>
            <person name="Harris A."/>
            <person name="Strong C.M."/>
            <person name="Hou S."/>
            <person name="Tomlinson C."/>
            <person name="Dauphin-Kohlberg S."/>
            <person name="Kozlowicz-Reilly A."/>
            <person name="Leonard S."/>
            <person name="Rohlfing T."/>
            <person name="Rock S.M."/>
            <person name="Tin-Wollam A.-M."/>
            <person name="Abbott A."/>
            <person name="Minx P."/>
            <person name="Maupin R."/>
            <person name="Strowmatt C."/>
            <person name="Latreille P."/>
            <person name="Miller N."/>
            <person name="Johnson D."/>
            <person name="Murray J."/>
            <person name="Woessner J.P."/>
            <person name="Wendl M.C."/>
            <person name="Yang S.-P."/>
            <person name="Schultz B.R."/>
            <person name="Wallis J.W."/>
            <person name="Spieth J."/>
            <person name="Bieri T.A."/>
            <person name="Nelson J.O."/>
            <person name="Berkowicz N."/>
            <person name="Wohldmann P.E."/>
            <person name="Cook L.L."/>
            <person name="Hickenbotham M.T."/>
            <person name="Eldred J."/>
            <person name="Williams D."/>
            <person name="Bedell J.A."/>
            <person name="Mardis E.R."/>
            <person name="Clifton S.W."/>
            <person name="Chissoe S.L."/>
            <person name="Marra M.A."/>
            <person name="Raymond C."/>
            <person name="Haugen E."/>
            <person name="Gillett W."/>
            <person name="Zhou Y."/>
            <person name="James R."/>
            <person name="Phelps K."/>
            <person name="Iadanoto S."/>
            <person name="Bubb K."/>
            <person name="Simms E."/>
            <person name="Levy R."/>
            <person name="Clendenning J."/>
            <person name="Kaul R."/>
            <person name="Kent W.J."/>
            <person name="Furey T.S."/>
            <person name="Baertsch R.A."/>
            <person name="Brent M.R."/>
            <person name="Keibler E."/>
            <person name="Flicek P."/>
            <person name="Bork P."/>
            <person name="Suyama M."/>
            <person name="Bailey J.A."/>
            <person name="Portnoy M.E."/>
            <person name="Torrents D."/>
            <person name="Chinwalla A.T."/>
            <person name="Gish W.R."/>
            <person name="Eddy S.R."/>
            <person name="McPherson J.D."/>
            <person name="Olson M.V."/>
            <person name="Eichler E.E."/>
            <person name="Green E.D."/>
            <person name="Waterston R.H."/>
            <person name="Wilson R.K."/>
        </authorList>
    </citation>
    <scope>NUCLEOTIDE SEQUENCE [LARGE SCALE GENOMIC DNA]</scope>
    <scope>VARIANT LEU-280</scope>
</reference>
<reference key="3">
    <citation type="journal article" date="2004" name="Genome Res.">
        <title>The status, quality, and expansion of the NIH full-length cDNA project: the Mammalian Gene Collection (MGC).</title>
        <authorList>
            <consortium name="The MGC Project Team"/>
        </authorList>
    </citation>
    <scope>NUCLEOTIDE SEQUENCE [LARGE SCALE MRNA]</scope>
</reference>
<reference key="4">
    <citation type="journal article" date="2004" name="Proc. Natl. Acad. Sci. U.S.A.">
        <title>The human olfactory receptor gene family.</title>
        <authorList>
            <person name="Malnic B."/>
            <person name="Godfrey P.A."/>
            <person name="Buck L.B."/>
        </authorList>
    </citation>
    <scope>IDENTIFICATION</scope>
</reference>
<reference key="5">
    <citation type="journal article" date="2004" name="Proc. Natl. Acad. Sci. U.S.A.">
        <authorList>
            <person name="Malnic B."/>
            <person name="Godfrey P.A."/>
            <person name="Buck L.B."/>
        </authorList>
    </citation>
    <scope>ERRATUM OF PUBMED:14983052</scope>
</reference>